<comment type="function">
    <text evidence="3">Ferredoxins are iron-sulfur proteins that transfer electrons in a wide variety of metabolic reactions. This ferredoxin may act as a phosphodonor to cytochrome P450 BioI.</text>
</comment>
<comment type="cofactor">
    <cofactor evidence="1">
        <name>[4Fe-4S] cluster</name>
        <dbReference type="ChEBI" id="CHEBI:49883"/>
    </cofactor>
    <text evidence="1">Binds 1 [4Fe-4S] cluster.</text>
</comment>
<comment type="biophysicochemical properties">
    <redoxPotential>
        <text evidence="3">E(0) is -385 +/- 10 mV for the 4Fe-4S clusters.</text>
    </redoxPotential>
</comment>
<evidence type="ECO:0000250" key="1"/>
<evidence type="ECO:0000255" key="2">
    <source>
        <dbReference type="PROSITE-ProRule" id="PRU00711"/>
    </source>
</evidence>
<evidence type="ECO:0000269" key="3">
    <source>
    </source>
</evidence>
<sequence>MAKYTIVDKDTCIACGACGAAAPDIYDYDDEGIAFVTLDENKGVVEVPEVLEEDMIDAFEGCPTDSIKVADEPFEGDPLKFE</sequence>
<reference key="1">
    <citation type="journal article" date="1996" name="Microbiology">
        <title>Sequence analysis of the Bacillus subtilis chromosome region between the serA and kdg loci cloned in a yeast artificial chromosome.</title>
        <authorList>
            <person name="Sorokin A.V."/>
            <person name="Azevedo V."/>
            <person name="Zumstein E."/>
            <person name="Galleron N."/>
            <person name="Ehrlich S.D."/>
            <person name="Serror P."/>
        </authorList>
    </citation>
    <scope>NUCLEOTIDE SEQUENCE [GENOMIC DNA]</scope>
    <source>
        <strain>168 / Marburg / ATCC 6051 / DSM 10 / JCM 1465 / NBRC 13719 / NCIMB 3610 / NRRL NRS-744 / VKM B-501</strain>
    </source>
</reference>
<reference key="2">
    <citation type="journal article" date="1997" name="Nature">
        <title>The complete genome sequence of the Gram-positive bacterium Bacillus subtilis.</title>
        <authorList>
            <person name="Kunst F."/>
            <person name="Ogasawara N."/>
            <person name="Moszer I."/>
            <person name="Albertini A.M."/>
            <person name="Alloni G."/>
            <person name="Azevedo V."/>
            <person name="Bertero M.G."/>
            <person name="Bessieres P."/>
            <person name="Bolotin A."/>
            <person name="Borchert S."/>
            <person name="Borriss R."/>
            <person name="Boursier L."/>
            <person name="Brans A."/>
            <person name="Braun M."/>
            <person name="Brignell S.C."/>
            <person name="Bron S."/>
            <person name="Brouillet S."/>
            <person name="Bruschi C.V."/>
            <person name="Caldwell B."/>
            <person name="Capuano V."/>
            <person name="Carter N.M."/>
            <person name="Choi S.-K."/>
            <person name="Codani J.-J."/>
            <person name="Connerton I.F."/>
            <person name="Cummings N.J."/>
            <person name="Daniel R.A."/>
            <person name="Denizot F."/>
            <person name="Devine K.M."/>
            <person name="Duesterhoeft A."/>
            <person name="Ehrlich S.D."/>
            <person name="Emmerson P.T."/>
            <person name="Entian K.-D."/>
            <person name="Errington J."/>
            <person name="Fabret C."/>
            <person name="Ferrari E."/>
            <person name="Foulger D."/>
            <person name="Fritz C."/>
            <person name="Fujita M."/>
            <person name="Fujita Y."/>
            <person name="Fuma S."/>
            <person name="Galizzi A."/>
            <person name="Galleron N."/>
            <person name="Ghim S.-Y."/>
            <person name="Glaser P."/>
            <person name="Goffeau A."/>
            <person name="Golightly E.J."/>
            <person name="Grandi G."/>
            <person name="Guiseppi G."/>
            <person name="Guy B.J."/>
            <person name="Haga K."/>
            <person name="Haiech J."/>
            <person name="Harwood C.R."/>
            <person name="Henaut A."/>
            <person name="Hilbert H."/>
            <person name="Holsappel S."/>
            <person name="Hosono S."/>
            <person name="Hullo M.-F."/>
            <person name="Itaya M."/>
            <person name="Jones L.-M."/>
            <person name="Joris B."/>
            <person name="Karamata D."/>
            <person name="Kasahara Y."/>
            <person name="Klaerr-Blanchard M."/>
            <person name="Klein C."/>
            <person name="Kobayashi Y."/>
            <person name="Koetter P."/>
            <person name="Koningstein G."/>
            <person name="Krogh S."/>
            <person name="Kumano M."/>
            <person name="Kurita K."/>
            <person name="Lapidus A."/>
            <person name="Lardinois S."/>
            <person name="Lauber J."/>
            <person name="Lazarevic V."/>
            <person name="Lee S.-M."/>
            <person name="Levine A."/>
            <person name="Liu H."/>
            <person name="Masuda S."/>
            <person name="Mauel C."/>
            <person name="Medigue C."/>
            <person name="Medina N."/>
            <person name="Mellado R.P."/>
            <person name="Mizuno M."/>
            <person name="Moestl D."/>
            <person name="Nakai S."/>
            <person name="Noback M."/>
            <person name="Noone D."/>
            <person name="O'Reilly M."/>
            <person name="Ogawa K."/>
            <person name="Ogiwara A."/>
            <person name="Oudega B."/>
            <person name="Park S.-H."/>
            <person name="Parro V."/>
            <person name="Pohl T.M."/>
            <person name="Portetelle D."/>
            <person name="Porwollik S."/>
            <person name="Prescott A.M."/>
            <person name="Presecan E."/>
            <person name="Pujic P."/>
            <person name="Purnelle B."/>
            <person name="Rapoport G."/>
            <person name="Rey M."/>
            <person name="Reynolds S."/>
            <person name="Rieger M."/>
            <person name="Rivolta C."/>
            <person name="Rocha E."/>
            <person name="Roche B."/>
            <person name="Rose M."/>
            <person name="Sadaie Y."/>
            <person name="Sato T."/>
            <person name="Scanlan E."/>
            <person name="Schleich S."/>
            <person name="Schroeter R."/>
            <person name="Scoffone F."/>
            <person name="Sekiguchi J."/>
            <person name="Sekowska A."/>
            <person name="Seror S.J."/>
            <person name="Serror P."/>
            <person name="Shin B.-S."/>
            <person name="Soldo B."/>
            <person name="Sorokin A."/>
            <person name="Tacconi E."/>
            <person name="Takagi T."/>
            <person name="Takahashi H."/>
            <person name="Takemaru K."/>
            <person name="Takeuchi M."/>
            <person name="Tamakoshi A."/>
            <person name="Tanaka T."/>
            <person name="Terpstra P."/>
            <person name="Tognoni A."/>
            <person name="Tosato V."/>
            <person name="Uchiyama S."/>
            <person name="Vandenbol M."/>
            <person name="Vannier F."/>
            <person name="Vassarotti A."/>
            <person name="Viari A."/>
            <person name="Wambutt R."/>
            <person name="Wedler E."/>
            <person name="Wedler H."/>
            <person name="Weitzenegger T."/>
            <person name="Winters P."/>
            <person name="Wipat A."/>
            <person name="Yamamoto H."/>
            <person name="Yamane K."/>
            <person name="Yasumoto K."/>
            <person name="Yata K."/>
            <person name="Yoshida K."/>
            <person name="Yoshikawa H.-F."/>
            <person name="Zumstein E."/>
            <person name="Yoshikawa H."/>
            <person name="Danchin A."/>
        </authorList>
    </citation>
    <scope>NUCLEOTIDE SEQUENCE [LARGE SCALE GENOMIC DNA]</scope>
    <source>
        <strain>168</strain>
    </source>
</reference>
<reference key="3">
    <citation type="journal article" date="2003" name="J. Inorg. Biochem.">
        <title>Expression, purification and characterisation of a Bacillus subtilis ferredoxin: a potential electron transfer donor to cytochrome P450 BioI.</title>
        <authorList>
            <person name="Green A.J."/>
            <person name="Munro A.W."/>
            <person name="Cheesman M.R."/>
            <person name="Reid G.A."/>
            <person name="von Wachenfeldt C."/>
            <person name="Chapman S.K."/>
        </authorList>
    </citation>
    <scope>PROTEIN SEQUENCE OF 2-11</scope>
    <scope>FUNCTION</scope>
    <scope>BIOPHYSICOCHEMICAL PROPERTIES</scope>
    <source>
        <strain>A1A</strain>
    </source>
</reference>
<feature type="initiator methionine" description="Removed" evidence="3">
    <location>
        <position position="1"/>
    </location>
</feature>
<feature type="chain" id="PRO_0000159191" description="Ferredoxin">
    <location>
        <begin position="2"/>
        <end position="82"/>
    </location>
</feature>
<feature type="domain" description="4Fe-4S ferredoxin-type" evidence="2">
    <location>
        <begin position="3"/>
        <end position="31"/>
    </location>
</feature>
<feature type="binding site" evidence="1">
    <location>
        <position position="12"/>
    </location>
    <ligand>
        <name>[4Fe-4S] cluster</name>
        <dbReference type="ChEBI" id="CHEBI:49883"/>
    </ligand>
</feature>
<feature type="binding site" evidence="1">
    <location>
        <position position="15"/>
    </location>
    <ligand>
        <name>[4Fe-4S] cluster</name>
        <dbReference type="ChEBI" id="CHEBI:49883"/>
    </ligand>
</feature>
<feature type="binding site" evidence="1">
    <location>
        <position position="18"/>
    </location>
    <ligand>
        <name>[4Fe-4S] cluster</name>
        <dbReference type="ChEBI" id="CHEBI:49883"/>
    </ligand>
</feature>
<feature type="binding site" evidence="1">
    <location>
        <position position="62"/>
    </location>
    <ligand>
        <name>[4Fe-4S] cluster</name>
        <dbReference type="ChEBI" id="CHEBI:49883"/>
    </ligand>
</feature>
<keyword id="KW-0004">4Fe-4S</keyword>
<keyword id="KW-0903">Direct protein sequencing</keyword>
<keyword id="KW-0249">Electron transport</keyword>
<keyword id="KW-0408">Iron</keyword>
<keyword id="KW-0411">Iron-sulfur</keyword>
<keyword id="KW-0479">Metal-binding</keyword>
<keyword id="KW-1185">Reference proteome</keyword>
<keyword id="KW-0677">Repeat</keyword>
<keyword id="KW-0813">Transport</keyword>
<dbReference type="EMBL" id="L47648">
    <property type="protein sequence ID" value="AAC83945.1"/>
    <property type="molecule type" value="Genomic_DNA"/>
</dbReference>
<dbReference type="EMBL" id="AL009126">
    <property type="protein sequence ID" value="CAB14220.1"/>
    <property type="molecule type" value="Genomic_DNA"/>
</dbReference>
<dbReference type="PIR" id="D69621">
    <property type="entry name" value="D69621"/>
</dbReference>
<dbReference type="RefSeq" id="NP_390185.1">
    <property type="nucleotide sequence ID" value="NC_000964.3"/>
</dbReference>
<dbReference type="RefSeq" id="WP_003225461.1">
    <property type="nucleotide sequence ID" value="NZ_OZ025638.1"/>
</dbReference>
<dbReference type="SMR" id="P50727"/>
<dbReference type="FunCoup" id="P50727">
    <property type="interactions" value="16"/>
</dbReference>
<dbReference type="STRING" id="224308.BSU23040"/>
<dbReference type="jPOST" id="P50727"/>
<dbReference type="PaxDb" id="224308-BSU23040"/>
<dbReference type="EnsemblBacteria" id="CAB14220">
    <property type="protein sequence ID" value="CAB14220"/>
    <property type="gene ID" value="BSU_23040"/>
</dbReference>
<dbReference type="GeneID" id="938968"/>
<dbReference type="KEGG" id="bsu:BSU23040"/>
<dbReference type="PATRIC" id="fig|224308.179.peg.2511"/>
<dbReference type="eggNOG" id="COG1141">
    <property type="taxonomic scope" value="Bacteria"/>
</dbReference>
<dbReference type="InParanoid" id="P50727"/>
<dbReference type="OrthoDB" id="9801085at2"/>
<dbReference type="PhylomeDB" id="P50727"/>
<dbReference type="BioCyc" id="BSUB:BSU23040-MONOMER"/>
<dbReference type="PRO" id="PR:P50727"/>
<dbReference type="Proteomes" id="UP000001570">
    <property type="component" value="Chromosome"/>
</dbReference>
<dbReference type="GO" id="GO:0051539">
    <property type="term" value="F:4 iron, 4 sulfur cluster binding"/>
    <property type="evidence" value="ECO:0000314"/>
    <property type="project" value="UniProtKB"/>
</dbReference>
<dbReference type="GO" id="GO:0009055">
    <property type="term" value="F:electron transfer activity"/>
    <property type="evidence" value="ECO:0000314"/>
    <property type="project" value="UniProtKB"/>
</dbReference>
<dbReference type="GO" id="GO:0005506">
    <property type="term" value="F:iron ion binding"/>
    <property type="evidence" value="ECO:0007669"/>
    <property type="project" value="InterPro"/>
</dbReference>
<dbReference type="FunFam" id="3.30.70.20:FF:000011">
    <property type="entry name" value="Ferredoxin"/>
    <property type="match status" value="1"/>
</dbReference>
<dbReference type="Gene3D" id="3.30.70.20">
    <property type="match status" value="1"/>
</dbReference>
<dbReference type="InterPro" id="IPR001080">
    <property type="entry name" value="3Fe4S_ferredoxin"/>
</dbReference>
<dbReference type="InterPro" id="IPR017896">
    <property type="entry name" value="4Fe4S_Fe-S-bd"/>
</dbReference>
<dbReference type="InterPro" id="IPR052395">
    <property type="entry name" value="ET_Ferredoxin"/>
</dbReference>
<dbReference type="PANTHER" id="PTHR39163">
    <property type="entry name" value="FERREDOXIN"/>
    <property type="match status" value="1"/>
</dbReference>
<dbReference type="PANTHER" id="PTHR39163:SF1">
    <property type="entry name" value="FERREDOXIN"/>
    <property type="match status" value="1"/>
</dbReference>
<dbReference type="Pfam" id="PF13370">
    <property type="entry name" value="Fer4_13"/>
    <property type="match status" value="1"/>
</dbReference>
<dbReference type="PRINTS" id="PR00352">
    <property type="entry name" value="3FE4SFRDOXIN"/>
</dbReference>
<dbReference type="SUPFAM" id="SSF54862">
    <property type="entry name" value="4Fe-4S ferredoxins"/>
    <property type="match status" value="1"/>
</dbReference>
<dbReference type="PROSITE" id="PS51379">
    <property type="entry name" value="4FE4S_FER_2"/>
    <property type="match status" value="1"/>
</dbReference>
<name>FER_BACSU</name>
<protein>
    <recommendedName>
        <fullName>Ferredoxin</fullName>
    </recommendedName>
</protein>
<proteinExistence type="evidence at protein level"/>
<accession>P50727</accession>
<organism>
    <name type="scientific">Bacillus subtilis (strain 168)</name>
    <dbReference type="NCBI Taxonomy" id="224308"/>
    <lineage>
        <taxon>Bacteria</taxon>
        <taxon>Bacillati</taxon>
        <taxon>Bacillota</taxon>
        <taxon>Bacilli</taxon>
        <taxon>Bacillales</taxon>
        <taxon>Bacillaceae</taxon>
        <taxon>Bacillus</taxon>
    </lineage>
</organism>
<gene>
    <name type="primary">fer</name>
    <name type="synonym">ypbA</name>
    <name type="ordered locus">BSU23040</name>
</gene>